<name>HFQ_FRATF</name>
<comment type="function">
    <text evidence="1">RNA chaperone that binds small regulatory RNA (sRNAs) and mRNAs to facilitate mRNA translational regulation in response to envelope stress, environmental stress and changes in metabolite concentrations. Also binds with high specificity to tRNAs.</text>
</comment>
<comment type="subunit">
    <text evidence="1">Homohexamer.</text>
</comment>
<comment type="similarity">
    <text evidence="1">Belongs to the Hfq family.</text>
</comment>
<protein>
    <recommendedName>
        <fullName evidence="1">RNA-binding protein Hfq</fullName>
    </recommendedName>
</protein>
<proteinExistence type="inferred from homology"/>
<dbReference type="EMBL" id="CP000803">
    <property type="protein sequence ID" value="ABU61425.1"/>
    <property type="molecule type" value="Genomic_DNA"/>
</dbReference>
<dbReference type="RefSeq" id="WP_003015654.1">
    <property type="nucleotide sequence ID" value="NC_009749.1"/>
</dbReference>
<dbReference type="SMR" id="A7NBS2"/>
<dbReference type="GeneID" id="75265215"/>
<dbReference type="KEGG" id="fta:FTA_0949"/>
<dbReference type="HOGENOM" id="CLU_113688_2_2_6"/>
<dbReference type="GO" id="GO:0005829">
    <property type="term" value="C:cytosol"/>
    <property type="evidence" value="ECO:0007669"/>
    <property type="project" value="TreeGrafter"/>
</dbReference>
<dbReference type="GO" id="GO:0003723">
    <property type="term" value="F:RNA binding"/>
    <property type="evidence" value="ECO:0007669"/>
    <property type="project" value="UniProtKB-UniRule"/>
</dbReference>
<dbReference type="GO" id="GO:0006355">
    <property type="term" value="P:regulation of DNA-templated transcription"/>
    <property type="evidence" value="ECO:0007669"/>
    <property type="project" value="InterPro"/>
</dbReference>
<dbReference type="GO" id="GO:0043487">
    <property type="term" value="P:regulation of RNA stability"/>
    <property type="evidence" value="ECO:0007669"/>
    <property type="project" value="TreeGrafter"/>
</dbReference>
<dbReference type="GO" id="GO:0045974">
    <property type="term" value="P:regulation of translation, ncRNA-mediated"/>
    <property type="evidence" value="ECO:0007669"/>
    <property type="project" value="TreeGrafter"/>
</dbReference>
<dbReference type="CDD" id="cd01716">
    <property type="entry name" value="Hfq"/>
    <property type="match status" value="1"/>
</dbReference>
<dbReference type="FunFam" id="2.30.30.100:FF:000001">
    <property type="entry name" value="RNA-binding protein Hfq"/>
    <property type="match status" value="1"/>
</dbReference>
<dbReference type="Gene3D" id="2.30.30.100">
    <property type="match status" value="1"/>
</dbReference>
<dbReference type="HAMAP" id="MF_00436">
    <property type="entry name" value="Hfq"/>
    <property type="match status" value="1"/>
</dbReference>
<dbReference type="InterPro" id="IPR005001">
    <property type="entry name" value="Hfq"/>
</dbReference>
<dbReference type="InterPro" id="IPR010920">
    <property type="entry name" value="LSM_dom_sf"/>
</dbReference>
<dbReference type="InterPro" id="IPR047575">
    <property type="entry name" value="Sm"/>
</dbReference>
<dbReference type="NCBIfam" id="TIGR02383">
    <property type="entry name" value="Hfq"/>
    <property type="match status" value="1"/>
</dbReference>
<dbReference type="NCBIfam" id="NF001602">
    <property type="entry name" value="PRK00395.1"/>
    <property type="match status" value="1"/>
</dbReference>
<dbReference type="PANTHER" id="PTHR34772">
    <property type="entry name" value="RNA-BINDING PROTEIN HFQ"/>
    <property type="match status" value="1"/>
</dbReference>
<dbReference type="PANTHER" id="PTHR34772:SF1">
    <property type="entry name" value="RNA-BINDING PROTEIN HFQ"/>
    <property type="match status" value="1"/>
</dbReference>
<dbReference type="Pfam" id="PF17209">
    <property type="entry name" value="Hfq"/>
    <property type="match status" value="1"/>
</dbReference>
<dbReference type="SUPFAM" id="SSF50182">
    <property type="entry name" value="Sm-like ribonucleoproteins"/>
    <property type="match status" value="1"/>
</dbReference>
<dbReference type="PROSITE" id="PS52002">
    <property type="entry name" value="SM"/>
    <property type="match status" value="1"/>
</dbReference>
<reference key="1">
    <citation type="journal article" date="2009" name="PLoS ONE">
        <title>Complete genome sequence of Francisella tularensis subspecies holarctica FTNF002-00.</title>
        <authorList>
            <person name="Barabote R.D."/>
            <person name="Xie G."/>
            <person name="Brettin T.S."/>
            <person name="Hinrichs S.H."/>
            <person name="Fey P.D."/>
            <person name="Jay J.J."/>
            <person name="Engle J.L."/>
            <person name="Godbole S.D."/>
            <person name="Noronha J.M."/>
            <person name="Scheuermann R.H."/>
            <person name="Zhou L.W."/>
            <person name="Lion C."/>
            <person name="Dempsey M.P."/>
        </authorList>
    </citation>
    <scope>NUCLEOTIDE SEQUENCE [LARGE SCALE GENOMIC DNA]</scope>
    <source>
        <strain>FTNF002-00 / FTA</strain>
    </source>
</reference>
<accession>A7NBS2</accession>
<organism>
    <name type="scientific">Francisella tularensis subsp. holarctica (strain FTNF002-00 / FTA)</name>
    <dbReference type="NCBI Taxonomy" id="458234"/>
    <lineage>
        <taxon>Bacteria</taxon>
        <taxon>Pseudomonadati</taxon>
        <taxon>Pseudomonadota</taxon>
        <taxon>Gammaproteobacteria</taxon>
        <taxon>Thiotrichales</taxon>
        <taxon>Francisellaceae</taxon>
        <taxon>Francisella</taxon>
    </lineage>
</organism>
<feature type="chain" id="PRO_1000025908" description="RNA-binding protein Hfq">
    <location>
        <begin position="1"/>
        <end position="109"/>
    </location>
</feature>
<feature type="domain" description="Sm" evidence="2">
    <location>
        <begin position="9"/>
        <end position="68"/>
    </location>
</feature>
<feature type="region of interest" description="Disordered" evidence="3">
    <location>
        <begin position="77"/>
        <end position="109"/>
    </location>
</feature>
<keyword id="KW-0694">RNA-binding</keyword>
<keyword id="KW-0346">Stress response</keyword>
<gene>
    <name evidence="1" type="primary">hfq</name>
    <name type="ordered locus">FTA_0949</name>
</gene>
<sequence>MSRISSLQDPFLNALRKEKVSVSVYLVNGIKLQGQVEAFDQFCIVLRNTVNQMVYKHAISTIVPAKSVRMVYSSFNPYHQNSNDEQDENVDDIHSDDLEIQENEGNIHE</sequence>
<evidence type="ECO:0000255" key="1">
    <source>
        <dbReference type="HAMAP-Rule" id="MF_00436"/>
    </source>
</evidence>
<evidence type="ECO:0000255" key="2">
    <source>
        <dbReference type="PROSITE-ProRule" id="PRU01346"/>
    </source>
</evidence>
<evidence type="ECO:0000256" key="3">
    <source>
        <dbReference type="SAM" id="MobiDB-lite"/>
    </source>
</evidence>